<reference key="1">
    <citation type="journal article" date="2003" name="Nature">
        <title>The genome sequence of Bacillus anthracis Ames and comparison to closely related bacteria.</title>
        <authorList>
            <person name="Read T.D."/>
            <person name="Peterson S.N."/>
            <person name="Tourasse N.J."/>
            <person name="Baillie L.W."/>
            <person name="Paulsen I.T."/>
            <person name="Nelson K.E."/>
            <person name="Tettelin H."/>
            <person name="Fouts D.E."/>
            <person name="Eisen J.A."/>
            <person name="Gill S.R."/>
            <person name="Holtzapple E.K."/>
            <person name="Okstad O.A."/>
            <person name="Helgason E."/>
            <person name="Rilstone J."/>
            <person name="Wu M."/>
            <person name="Kolonay J.F."/>
            <person name="Beanan M.J."/>
            <person name="Dodson R.J."/>
            <person name="Brinkac L.M."/>
            <person name="Gwinn M.L."/>
            <person name="DeBoy R.T."/>
            <person name="Madpu R."/>
            <person name="Daugherty S.C."/>
            <person name="Durkin A.S."/>
            <person name="Haft D.H."/>
            <person name="Nelson W.C."/>
            <person name="Peterson J.D."/>
            <person name="Pop M."/>
            <person name="Khouri H.M."/>
            <person name="Radune D."/>
            <person name="Benton J.L."/>
            <person name="Mahamoud Y."/>
            <person name="Jiang L."/>
            <person name="Hance I.R."/>
            <person name="Weidman J.F."/>
            <person name="Berry K.J."/>
            <person name="Plaut R.D."/>
            <person name="Wolf A.M."/>
            <person name="Watkins K.L."/>
            <person name="Nierman W.C."/>
            <person name="Hazen A."/>
            <person name="Cline R.T."/>
            <person name="Redmond C."/>
            <person name="Thwaite J.E."/>
            <person name="White O."/>
            <person name="Salzberg S.L."/>
            <person name="Thomason B."/>
            <person name="Friedlander A.M."/>
            <person name="Koehler T.M."/>
            <person name="Hanna P.C."/>
            <person name="Kolstoe A.-B."/>
            <person name="Fraser C.M."/>
        </authorList>
    </citation>
    <scope>NUCLEOTIDE SEQUENCE [LARGE SCALE GENOMIC DNA]</scope>
    <source>
        <strain>Ames / isolate Porton</strain>
    </source>
</reference>
<reference key="2">
    <citation type="journal article" date="2009" name="J. Bacteriol.">
        <title>The complete genome sequence of Bacillus anthracis Ames 'Ancestor'.</title>
        <authorList>
            <person name="Ravel J."/>
            <person name="Jiang L."/>
            <person name="Stanley S.T."/>
            <person name="Wilson M.R."/>
            <person name="Decker R.S."/>
            <person name="Read T.D."/>
            <person name="Worsham P."/>
            <person name="Keim P.S."/>
            <person name="Salzberg S.L."/>
            <person name="Fraser-Liggett C.M."/>
            <person name="Rasko D.A."/>
        </authorList>
    </citation>
    <scope>NUCLEOTIDE SEQUENCE [LARGE SCALE GENOMIC DNA]</scope>
    <source>
        <strain>Ames ancestor</strain>
    </source>
</reference>
<reference key="3">
    <citation type="submission" date="2004-01" db="EMBL/GenBank/DDBJ databases">
        <title>Complete genome sequence of Bacillus anthracis Sterne.</title>
        <authorList>
            <person name="Brettin T.S."/>
            <person name="Bruce D."/>
            <person name="Challacombe J.F."/>
            <person name="Gilna P."/>
            <person name="Han C."/>
            <person name="Hill K."/>
            <person name="Hitchcock P."/>
            <person name="Jackson P."/>
            <person name="Keim P."/>
            <person name="Longmire J."/>
            <person name="Lucas S."/>
            <person name="Okinaka R."/>
            <person name="Richardson P."/>
            <person name="Rubin E."/>
            <person name="Tice H."/>
        </authorList>
    </citation>
    <scope>NUCLEOTIDE SEQUENCE [LARGE SCALE GENOMIC DNA]</scope>
    <source>
        <strain>Sterne</strain>
    </source>
</reference>
<proteinExistence type="inferred from homology"/>
<evidence type="ECO:0000255" key="1">
    <source>
        <dbReference type="HAMAP-Rule" id="MF_00403"/>
    </source>
</evidence>
<evidence type="ECO:0000305" key="2"/>
<sequence>MPTINQLVRNGRTDKVWKSKSPALNKGFNSLKKKSTDISAPQKRGVCTRVGTMTPKKPNSALRKYARVRLTNGIEVTAYIPGIGHNLQEHSVVLIRGGRVKDLPGVRYHIVRGALDTAGVDKRMQGRSKYGTKKPKAAKK</sequence>
<organism>
    <name type="scientific">Bacillus anthracis</name>
    <dbReference type="NCBI Taxonomy" id="1392"/>
    <lineage>
        <taxon>Bacteria</taxon>
        <taxon>Bacillati</taxon>
        <taxon>Bacillota</taxon>
        <taxon>Bacilli</taxon>
        <taxon>Bacillales</taxon>
        <taxon>Bacillaceae</taxon>
        <taxon>Bacillus</taxon>
        <taxon>Bacillus cereus group</taxon>
    </lineage>
</organism>
<keyword id="KW-1185">Reference proteome</keyword>
<keyword id="KW-0687">Ribonucleoprotein</keyword>
<keyword id="KW-0689">Ribosomal protein</keyword>
<keyword id="KW-0694">RNA-binding</keyword>
<keyword id="KW-0699">rRNA-binding</keyword>
<keyword id="KW-0820">tRNA-binding</keyword>
<feature type="chain" id="PRO_0000146168" description="Small ribosomal subunit protein uS12">
    <location>
        <begin position="1"/>
        <end position="140"/>
    </location>
</feature>
<gene>
    <name evidence="1" type="primary">rpsL</name>
    <name type="ordered locus">BA_0105</name>
    <name type="ordered locus">GBAA_0105</name>
    <name type="ordered locus">BAS0105</name>
</gene>
<name>RS12_BACAN</name>
<dbReference type="EMBL" id="AE016879">
    <property type="protein sequence ID" value="AAP24159.1"/>
    <property type="molecule type" value="Genomic_DNA"/>
</dbReference>
<dbReference type="EMBL" id="AE017334">
    <property type="protein sequence ID" value="AAT29185.1"/>
    <property type="molecule type" value="Genomic_DNA"/>
</dbReference>
<dbReference type="EMBL" id="AE017225">
    <property type="protein sequence ID" value="AAT52442.1"/>
    <property type="molecule type" value="Genomic_DNA"/>
</dbReference>
<dbReference type="RefSeq" id="NP_842673.1">
    <property type="nucleotide sequence ID" value="NC_003997.3"/>
</dbReference>
<dbReference type="RefSeq" id="WP_001142340.1">
    <property type="nucleotide sequence ID" value="NZ_WXXJ01000051.1"/>
</dbReference>
<dbReference type="RefSeq" id="YP_026391.1">
    <property type="nucleotide sequence ID" value="NC_005945.1"/>
</dbReference>
<dbReference type="SMR" id="Q81VT5"/>
<dbReference type="STRING" id="261594.GBAA_0105"/>
<dbReference type="DNASU" id="1086682"/>
<dbReference type="GeneID" id="93010948"/>
<dbReference type="KEGG" id="ban:BA_0105"/>
<dbReference type="KEGG" id="bar:GBAA_0105"/>
<dbReference type="KEGG" id="bat:BAS0105"/>
<dbReference type="PATRIC" id="fig|198094.11.peg.102"/>
<dbReference type="eggNOG" id="COG0048">
    <property type="taxonomic scope" value="Bacteria"/>
</dbReference>
<dbReference type="HOGENOM" id="CLU_104295_1_2_9"/>
<dbReference type="OMA" id="VCIRVYT"/>
<dbReference type="OrthoDB" id="9802366at2"/>
<dbReference type="Proteomes" id="UP000000427">
    <property type="component" value="Chromosome"/>
</dbReference>
<dbReference type="Proteomes" id="UP000000594">
    <property type="component" value="Chromosome"/>
</dbReference>
<dbReference type="GO" id="GO:0015935">
    <property type="term" value="C:small ribosomal subunit"/>
    <property type="evidence" value="ECO:0007669"/>
    <property type="project" value="InterPro"/>
</dbReference>
<dbReference type="GO" id="GO:0019843">
    <property type="term" value="F:rRNA binding"/>
    <property type="evidence" value="ECO:0007669"/>
    <property type="project" value="UniProtKB-UniRule"/>
</dbReference>
<dbReference type="GO" id="GO:0003735">
    <property type="term" value="F:structural constituent of ribosome"/>
    <property type="evidence" value="ECO:0007669"/>
    <property type="project" value="InterPro"/>
</dbReference>
<dbReference type="GO" id="GO:0000049">
    <property type="term" value="F:tRNA binding"/>
    <property type="evidence" value="ECO:0007669"/>
    <property type="project" value="UniProtKB-UniRule"/>
</dbReference>
<dbReference type="GO" id="GO:0006412">
    <property type="term" value="P:translation"/>
    <property type="evidence" value="ECO:0007669"/>
    <property type="project" value="UniProtKB-UniRule"/>
</dbReference>
<dbReference type="CDD" id="cd03368">
    <property type="entry name" value="Ribosomal_S12"/>
    <property type="match status" value="1"/>
</dbReference>
<dbReference type="FunFam" id="2.40.50.140:FF:000001">
    <property type="entry name" value="30S ribosomal protein S12"/>
    <property type="match status" value="1"/>
</dbReference>
<dbReference type="Gene3D" id="2.40.50.140">
    <property type="entry name" value="Nucleic acid-binding proteins"/>
    <property type="match status" value="1"/>
</dbReference>
<dbReference type="HAMAP" id="MF_00403_B">
    <property type="entry name" value="Ribosomal_uS12_B"/>
    <property type="match status" value="1"/>
</dbReference>
<dbReference type="InterPro" id="IPR012340">
    <property type="entry name" value="NA-bd_OB-fold"/>
</dbReference>
<dbReference type="InterPro" id="IPR006032">
    <property type="entry name" value="Ribosomal_uS12"/>
</dbReference>
<dbReference type="InterPro" id="IPR005679">
    <property type="entry name" value="Ribosomal_uS12_bac"/>
</dbReference>
<dbReference type="NCBIfam" id="TIGR00981">
    <property type="entry name" value="rpsL_bact"/>
    <property type="match status" value="1"/>
</dbReference>
<dbReference type="PANTHER" id="PTHR11652">
    <property type="entry name" value="30S RIBOSOMAL PROTEIN S12 FAMILY MEMBER"/>
    <property type="match status" value="1"/>
</dbReference>
<dbReference type="Pfam" id="PF00164">
    <property type="entry name" value="Ribosom_S12_S23"/>
    <property type="match status" value="1"/>
</dbReference>
<dbReference type="PRINTS" id="PR01034">
    <property type="entry name" value="RIBOSOMALS12"/>
</dbReference>
<dbReference type="SUPFAM" id="SSF50249">
    <property type="entry name" value="Nucleic acid-binding proteins"/>
    <property type="match status" value="1"/>
</dbReference>
<dbReference type="PROSITE" id="PS00055">
    <property type="entry name" value="RIBOSOMAL_S12"/>
    <property type="match status" value="1"/>
</dbReference>
<protein>
    <recommendedName>
        <fullName evidence="1">Small ribosomal subunit protein uS12</fullName>
    </recommendedName>
    <alternativeName>
        <fullName evidence="2">30S ribosomal protein S12</fullName>
    </alternativeName>
</protein>
<comment type="function">
    <text evidence="1">With S4 and S5 plays an important role in translational accuracy.</text>
</comment>
<comment type="function">
    <text evidence="1">Interacts with and stabilizes bases of the 16S rRNA that are involved in tRNA selection in the A site and with the mRNA backbone. Located at the interface of the 30S and 50S subunits, it traverses the body of the 30S subunit contacting proteins on the other side and probably holding the rRNA structure together. The combined cluster of proteins S8, S12 and S17 appears to hold together the shoulder and platform of the 30S subunit.</text>
</comment>
<comment type="subunit">
    <text evidence="1">Part of the 30S ribosomal subunit. Contacts proteins S8 and S17. May interact with IF1 in the 30S initiation complex.</text>
</comment>
<comment type="similarity">
    <text evidence="1">Belongs to the universal ribosomal protein uS12 family.</text>
</comment>
<comment type="caution">
    <text evidence="2">Because the enzyme that would modify Asp-102 to 3-methylthioaspartic acid has not been found in the proteome of this organism, that modification is not predicted.</text>
</comment>
<accession>Q81VT5</accession>
<accession>Q6I4T9</accession>
<accession>Q6KYI5</accession>